<reference key="1">
    <citation type="journal article" date="2006" name="Nature">
        <title>DNA sequence of human chromosome 17 and analysis of rearrangement in the human lineage.</title>
        <authorList>
            <person name="Zody M.C."/>
            <person name="Garber M."/>
            <person name="Adams D.J."/>
            <person name="Sharpe T."/>
            <person name="Harrow J."/>
            <person name="Lupski J.R."/>
            <person name="Nicholson C."/>
            <person name="Searle S.M."/>
            <person name="Wilming L."/>
            <person name="Young S.K."/>
            <person name="Abouelleil A."/>
            <person name="Allen N.R."/>
            <person name="Bi W."/>
            <person name="Bloom T."/>
            <person name="Borowsky M.L."/>
            <person name="Bugalter B.E."/>
            <person name="Butler J."/>
            <person name="Chang J.L."/>
            <person name="Chen C.-K."/>
            <person name="Cook A."/>
            <person name="Corum B."/>
            <person name="Cuomo C.A."/>
            <person name="de Jong P.J."/>
            <person name="DeCaprio D."/>
            <person name="Dewar K."/>
            <person name="FitzGerald M."/>
            <person name="Gilbert J."/>
            <person name="Gibson R."/>
            <person name="Gnerre S."/>
            <person name="Goldstein S."/>
            <person name="Grafham D.V."/>
            <person name="Grocock R."/>
            <person name="Hafez N."/>
            <person name="Hagopian D.S."/>
            <person name="Hart E."/>
            <person name="Norman C.H."/>
            <person name="Humphray S."/>
            <person name="Jaffe D.B."/>
            <person name="Jones M."/>
            <person name="Kamal M."/>
            <person name="Khodiyar V.K."/>
            <person name="LaButti K."/>
            <person name="Laird G."/>
            <person name="Lehoczky J."/>
            <person name="Liu X."/>
            <person name="Lokyitsang T."/>
            <person name="Loveland J."/>
            <person name="Lui A."/>
            <person name="Macdonald P."/>
            <person name="Major J.E."/>
            <person name="Matthews L."/>
            <person name="Mauceli E."/>
            <person name="McCarroll S.A."/>
            <person name="Mihalev A.H."/>
            <person name="Mudge J."/>
            <person name="Nguyen C."/>
            <person name="Nicol R."/>
            <person name="O'Leary S.B."/>
            <person name="Osoegawa K."/>
            <person name="Schwartz D.C."/>
            <person name="Shaw-Smith C."/>
            <person name="Stankiewicz P."/>
            <person name="Steward C."/>
            <person name="Swarbreck D."/>
            <person name="Venkataraman V."/>
            <person name="Whittaker C.A."/>
            <person name="Yang X."/>
            <person name="Zimmer A.R."/>
            <person name="Bradley A."/>
            <person name="Hubbard T."/>
            <person name="Birren B.W."/>
            <person name="Rogers J."/>
            <person name="Lander E.S."/>
            <person name="Nusbaum C."/>
        </authorList>
    </citation>
    <scope>NUCLEOTIDE SEQUENCE [LARGE SCALE GENOMIC DNA]</scope>
</reference>
<reference key="2">
    <citation type="submission" date="2005-07" db="EMBL/GenBank/DDBJ databases">
        <authorList>
            <person name="Mural R.J."/>
            <person name="Istrail S."/>
            <person name="Sutton G.G."/>
            <person name="Florea L."/>
            <person name="Halpern A.L."/>
            <person name="Mobarry C.M."/>
            <person name="Lippert R."/>
            <person name="Walenz B."/>
            <person name="Shatkay H."/>
            <person name="Dew I."/>
            <person name="Miller J.R."/>
            <person name="Flanigan M.J."/>
            <person name="Edwards N.J."/>
            <person name="Bolanos R."/>
            <person name="Fasulo D."/>
            <person name="Halldorsson B.V."/>
            <person name="Hannenhalli S."/>
            <person name="Turner R."/>
            <person name="Yooseph S."/>
            <person name="Lu F."/>
            <person name="Nusskern D.R."/>
            <person name="Shue B.C."/>
            <person name="Zheng X.H."/>
            <person name="Zhong F."/>
            <person name="Delcher A.L."/>
            <person name="Huson D.H."/>
            <person name="Kravitz S.A."/>
            <person name="Mouchard L."/>
            <person name="Reinert K."/>
            <person name="Remington K.A."/>
            <person name="Clark A.G."/>
            <person name="Waterman M.S."/>
            <person name="Eichler E.E."/>
            <person name="Adams M.D."/>
            <person name="Hunkapiller M.W."/>
            <person name="Myers E.W."/>
            <person name="Venter J.C."/>
        </authorList>
    </citation>
    <scope>NUCLEOTIDE SEQUENCE [LARGE SCALE GENOMIC DNA]</scope>
</reference>
<reference key="3">
    <citation type="journal article" date="2008" name="Proc. Natl. Acad. Sci. U.S.A.">
        <title>A quantitative atlas of mitotic phosphorylation.</title>
        <authorList>
            <person name="Dephoure N."/>
            <person name="Zhou C."/>
            <person name="Villen J."/>
            <person name="Beausoleil S.A."/>
            <person name="Bakalarski C.E."/>
            <person name="Elledge S.J."/>
            <person name="Gygi S.P."/>
        </authorList>
    </citation>
    <scope>PHOSPHORYLATION [LARGE SCALE ANALYSIS] AT SER-15 AND SER-19</scope>
    <scope>IDENTIFICATION BY MASS SPECTROMETRY [LARGE SCALE ANALYSIS]</scope>
    <source>
        <tissue>Cervix carcinoma</tissue>
    </source>
</reference>
<reference key="4">
    <citation type="journal article" date="2014" name="Mol. Cell. Proteomics">
        <title>Immunoaffinity enrichment and mass spectrometry analysis of protein methylation.</title>
        <authorList>
            <person name="Guo A."/>
            <person name="Gu H."/>
            <person name="Zhou J."/>
            <person name="Mulhern D."/>
            <person name="Wang Y."/>
            <person name="Lee K.A."/>
            <person name="Yang V."/>
            <person name="Aguiar M."/>
            <person name="Kornhauser J."/>
            <person name="Jia X."/>
            <person name="Ren J."/>
            <person name="Beausoleil S.A."/>
            <person name="Silva J.C."/>
            <person name="Vemulapalli V."/>
            <person name="Bedford M.T."/>
            <person name="Comb M.J."/>
        </authorList>
    </citation>
    <scope>METHYLATION [LARGE SCALE ANALYSIS] AT ARG-52</scope>
    <scope>IDENTIFICATION BY MASS SPECTROMETRY [LARGE SCALE ANALYSIS]</scope>
    <source>
        <tissue>Colon carcinoma</tissue>
    </source>
</reference>
<reference key="5">
    <citation type="journal article" date="2014" name="Proc. Natl. Acad. Sci. U.S.A.">
        <title>Reciprocal interactions of human C10orf12 and C17orf96 with PRC2 revealed by BioTAP-XL cross-linking and affinity purification.</title>
        <authorList>
            <person name="Alekseyenko A.A."/>
            <person name="Gorchakov A.A."/>
            <person name="Kharchenko P.V."/>
            <person name="Kuroda M.I."/>
        </authorList>
    </citation>
    <scope>INTERACTION WITH THE PRC2/EZH2 COMPLEX</scope>
</reference>
<reference evidence="5" key="6">
    <citation type="journal article" date="2018" name="Mol. Cell">
        <title>Unique Structural Platforms of Suz12 Dictate Distinct Classes of PRC2 for Chromatin Binding.</title>
        <authorList>
            <person name="Chen S."/>
            <person name="Jiao L."/>
            <person name="Shubbar M."/>
            <person name="Yang X."/>
            <person name="Liu X."/>
        </authorList>
    </citation>
    <scope>IDENTIFICATION IN THE PRC2 COMPLEX</scope>
    <scope>INTERACTION WITH SUZ12</scope>
</reference>
<sequence>METLCPAPRLAVPASPRGSPCSPTPRKPCRGTQEFSPLCLRALAFCALAKPRASSLGPGPGELAARSPVLRGPQAPLRPGGWAPDGLKHLWAPTGRPGVPNTAAGEDADVAACPRRGEEEEGGGGFPHFGVRSCAPPGRCPAPPHPRESTTSFASAPPRPAPGLEPQRGPAASPPQEPSSRPPSPPAGLSTEPAGPGTAPRPFLPGQPAEVDGNPPPAAPEAPAASPSTASPAPAAPGDLRQEHFDRLIRRSKLWCYAKGFALDTPSLRRGPERPPAKGPARGAAKKRRLPAPPPRTAQPRRPAPTLPTTSTFSLLNCFPCPPALVVGEDGDLKPASSLRLQGDSKPPPAHPLWRWQMGGPAVPEPPGLKFWGINMDES</sequence>
<feature type="chain" id="PRO_0000332154" description="Elongin BC and Polycomb repressive complex 2-associated protein">
    <location>
        <begin position="1"/>
        <end position="379"/>
    </location>
</feature>
<feature type="region of interest" description="Disordered" evidence="2">
    <location>
        <begin position="1"/>
        <end position="27"/>
    </location>
</feature>
<feature type="region of interest" description="BC-box" evidence="1">
    <location>
        <begin position="39"/>
        <end position="48"/>
    </location>
</feature>
<feature type="region of interest" description="Disordered" evidence="2">
    <location>
        <begin position="72"/>
        <end position="105"/>
    </location>
</feature>
<feature type="region of interest" description="Disordered" evidence="2">
    <location>
        <begin position="137"/>
        <end position="244"/>
    </location>
</feature>
<feature type="region of interest" description="Disordered" evidence="2">
    <location>
        <begin position="264"/>
        <end position="309"/>
    </location>
</feature>
<feature type="region of interest" description="Interaction with SUZ12" evidence="4">
    <location>
        <begin position="311"/>
        <end position="359"/>
    </location>
</feature>
<feature type="compositionally biased region" description="Pro residues" evidence="2">
    <location>
        <begin position="172"/>
        <end position="186"/>
    </location>
</feature>
<feature type="compositionally biased region" description="Low complexity" evidence="2">
    <location>
        <begin position="221"/>
        <end position="237"/>
    </location>
</feature>
<feature type="compositionally biased region" description="Pro residues" evidence="2">
    <location>
        <begin position="291"/>
        <end position="306"/>
    </location>
</feature>
<feature type="modified residue" description="Phosphoserine" evidence="7">
    <location>
        <position position="15"/>
    </location>
</feature>
<feature type="modified residue" description="Phosphoserine" evidence="7">
    <location>
        <position position="19"/>
    </location>
</feature>
<feature type="modified residue" description="Asymmetric dimethylarginine" evidence="8">
    <location>
        <position position="52"/>
    </location>
</feature>
<keyword id="KW-0158">Chromosome</keyword>
<keyword id="KW-0488">Methylation</keyword>
<keyword id="KW-0539">Nucleus</keyword>
<keyword id="KW-0597">Phosphoprotein</keyword>
<keyword id="KW-1267">Proteomics identification</keyword>
<keyword id="KW-1185">Reference proteome</keyword>
<accession>A6NHQ4</accession>
<proteinExistence type="evidence at protein level"/>
<protein>
    <recommendedName>
        <fullName evidence="1">Elongin BC and Polycomb repressive complex 2-associated protein</fullName>
    </recommendedName>
    <alternativeName>
        <fullName evidence="6">Proline-rich protein 28</fullName>
    </alternativeName>
</protein>
<comment type="function">
    <text evidence="1">Scaffold protein that serves as a bridging partner between the PRC2/EZH2 complex and the elongin BC complex: required to fine-tune the transcriptional status of Polycomb group (PcG) target genes in embryonic stem cells (ESCs). Plays a key role in genomic regions that display both active and repressive chromatin properties in pluripotent stem cells by sustaining low level expression at PcG target genes: acts by recruiting the elongin BC complex, thereby restricting excessive activity of the PRC2/EZH2 complex. Interaction with USP7 promotes deubiquitination of H2B at promoter sites. Acts as a regulator of neuronal differentiation.</text>
</comment>
<comment type="subunit">
    <text evidence="1 3 4">Associates with the PRC2 complex, which consists of the core components EED, EZH1 or EZH2, SUZ12, and RBBP4, and various combinations of accessory subunits including AEBP2, JARID2, PHF19, MTF2 and EPOP (PubMed:24550272, PubMed:29499137). Within the complex, interacts with SUZ12 (via C2H2 zinc finger domain); competes with JARID2 for SUZ12 binding (PubMed:29499137). Associates with the elongin BC complex (By similarity). Interacts with USP7 (By similarity).</text>
</comment>
<comment type="subcellular location">
    <subcellularLocation>
        <location evidence="1">Nucleus</location>
    </subcellularLocation>
    <subcellularLocation>
        <location evidence="1">Chromosome</location>
    </subcellularLocation>
    <text evidence="1">Localizes at both PRC2/EZH2 sites (H3K27me3) and broad H3K4me3 sites on chromatin of embryonic stem cells (ESCs).</text>
</comment>
<comment type="domain">
    <text evidence="1">The BC-box, which mediates binding to the elongin BC complex.</text>
</comment>
<organism>
    <name type="scientific">Homo sapiens</name>
    <name type="common">Human</name>
    <dbReference type="NCBI Taxonomy" id="9606"/>
    <lineage>
        <taxon>Eukaryota</taxon>
        <taxon>Metazoa</taxon>
        <taxon>Chordata</taxon>
        <taxon>Craniata</taxon>
        <taxon>Vertebrata</taxon>
        <taxon>Euteleostomi</taxon>
        <taxon>Mammalia</taxon>
        <taxon>Eutheria</taxon>
        <taxon>Euarchontoglires</taxon>
        <taxon>Primates</taxon>
        <taxon>Haplorrhini</taxon>
        <taxon>Catarrhini</taxon>
        <taxon>Hominidae</taxon>
        <taxon>Homo</taxon>
    </lineage>
</organism>
<name>EPOP_HUMAN</name>
<gene>
    <name evidence="6" type="primary">EPOP</name>
    <name evidence="6" type="synonym">C17orf96</name>
    <name evidence="6" type="synonym">PRR28</name>
</gene>
<evidence type="ECO:0000250" key="1">
    <source>
        <dbReference type="UniProtKB" id="Q7TNS8"/>
    </source>
</evidence>
<evidence type="ECO:0000256" key="2">
    <source>
        <dbReference type="SAM" id="MobiDB-lite"/>
    </source>
</evidence>
<evidence type="ECO:0000269" key="3">
    <source>
    </source>
</evidence>
<evidence type="ECO:0000269" key="4">
    <source>
    </source>
</evidence>
<evidence type="ECO:0000305" key="5"/>
<evidence type="ECO:0000312" key="6">
    <source>
        <dbReference type="HGNC" id="HGNC:34493"/>
    </source>
</evidence>
<evidence type="ECO:0007744" key="7">
    <source>
    </source>
</evidence>
<evidence type="ECO:0007744" key="8">
    <source>
    </source>
</evidence>
<dbReference type="EMBL" id="AC006449">
    <property type="status" value="NOT_ANNOTATED_CDS"/>
    <property type="molecule type" value="Genomic_DNA"/>
</dbReference>
<dbReference type="EMBL" id="CH471152">
    <property type="protein sequence ID" value="EAW60520.1"/>
    <property type="molecule type" value="Genomic_DNA"/>
</dbReference>
<dbReference type="CCDS" id="CCDS45661.1"/>
<dbReference type="RefSeq" id="NP_001124149.1">
    <property type="nucleotide sequence ID" value="NM_001130677.2"/>
</dbReference>
<dbReference type="SMR" id="A6NHQ4"/>
<dbReference type="BioGRID" id="936860">
    <property type="interactions" value="29"/>
</dbReference>
<dbReference type="ComplexPortal" id="CPX-2205">
    <property type="entry name" value="Polycomb repressive complex 2.1, EZH1-RBBP7-PCL1-EPOP variant"/>
</dbReference>
<dbReference type="ComplexPortal" id="CPX-2317">
    <property type="entry name" value="Polycomb repressive complex 2.1, EZH1-RBBP4-PCL1-EPOP variant"/>
</dbReference>
<dbReference type="ComplexPortal" id="CPX-2318">
    <property type="entry name" value="Polycomb repressive complex 2.1, EZH1-RBBP4-PCL2-EPOP variant"/>
</dbReference>
<dbReference type="ComplexPortal" id="CPX-2320">
    <property type="entry name" value="Polycomb repressive complex 2.1, EZH1-RBBP7-PCL2-EPOP variant"/>
</dbReference>
<dbReference type="ComplexPortal" id="CPX-2322">
    <property type="entry name" value="Polycomb repressive complex 2.1, EZH1-RBBP4-PCL3-EPOP variant"/>
</dbReference>
<dbReference type="ComplexPortal" id="CPX-2323">
    <property type="entry name" value="Polycomb repressive complex 2.1, EZH1-RBBP7-PCL3-EPOP variant"/>
</dbReference>
<dbReference type="ComplexPortal" id="CPX-2324">
    <property type="entry name" value="Polycomb repressive complex 2.1, EZH2-RBBP4-PCL1-EPOP variant"/>
</dbReference>
<dbReference type="ComplexPortal" id="CPX-2325">
    <property type="entry name" value="Polycomb repressive complex 2.1, EZH2-RBBP7-PCL1-EPOP variant"/>
</dbReference>
<dbReference type="ComplexPortal" id="CPX-2326">
    <property type="entry name" value="Polycomb repressive complex 2.1, EZH2-RBBP4-PCL2-EPOP variant"/>
</dbReference>
<dbReference type="ComplexPortal" id="CPX-2327">
    <property type="entry name" value="Polycomb repressive complex 2.1, EZH2-RBBP7-PCL2-EPOP variant"/>
</dbReference>
<dbReference type="ComplexPortal" id="CPX-2328">
    <property type="entry name" value="Polycomb repressive complex 2.1, EZH2-RBBP4-PCL3-EPOP variant"/>
</dbReference>
<dbReference type="ComplexPortal" id="CPX-2329">
    <property type="entry name" value="Polycomb repressive complex 2.1, EZH2-RBBP7-PCL3-EPOP variant"/>
</dbReference>
<dbReference type="FunCoup" id="A6NHQ4">
    <property type="interactions" value="84"/>
</dbReference>
<dbReference type="IntAct" id="A6NHQ4">
    <property type="interactions" value="19"/>
</dbReference>
<dbReference type="MINT" id="A6NHQ4"/>
<dbReference type="STRING" id="9606.ENSP00000484710"/>
<dbReference type="GlyGen" id="A6NHQ4">
    <property type="glycosylation" value="1 site, 1 O-linked glycan (1 site)"/>
</dbReference>
<dbReference type="iPTMnet" id="A6NHQ4"/>
<dbReference type="PhosphoSitePlus" id="A6NHQ4"/>
<dbReference type="BioMuta" id="EPOP"/>
<dbReference type="jPOST" id="A6NHQ4"/>
<dbReference type="MassIVE" id="A6NHQ4"/>
<dbReference type="PaxDb" id="9606-ENSP00000484710"/>
<dbReference type="PeptideAtlas" id="A6NHQ4"/>
<dbReference type="ProteomicsDB" id="1217"/>
<dbReference type="Antibodypedia" id="74279">
    <property type="antibodies" value="21 antibodies from 6 providers"/>
</dbReference>
<dbReference type="DNASU" id="100170841"/>
<dbReference type="Ensembl" id="ENST00000613024.2">
    <property type="protein sequence ID" value="ENSP00000483859.1"/>
    <property type="gene ID" value="ENSG00000277303.2"/>
</dbReference>
<dbReference type="Ensembl" id="ENST00000621654.2">
    <property type="protein sequence ID" value="ENSP00000484710.1"/>
    <property type="gene ID" value="ENSG00000273604.2"/>
</dbReference>
<dbReference type="GeneID" id="100170841"/>
<dbReference type="KEGG" id="hsa:100170841"/>
<dbReference type="MANE-Select" id="ENST00000621654.2">
    <property type="protein sequence ID" value="ENSP00000484710.1"/>
    <property type="RefSeq nucleotide sequence ID" value="NM_001130677.2"/>
    <property type="RefSeq protein sequence ID" value="NP_001124149.1"/>
</dbReference>
<dbReference type="UCSC" id="uc010wdq.3">
    <property type="organism name" value="human"/>
</dbReference>
<dbReference type="AGR" id="HGNC:34493"/>
<dbReference type="CTD" id="100170841"/>
<dbReference type="GeneCards" id="EPOP"/>
<dbReference type="HGNC" id="HGNC:34493">
    <property type="gene designation" value="EPOP"/>
</dbReference>
<dbReference type="HPA" id="ENSG00000273604">
    <property type="expression patterns" value="Tissue enhanced (brain, testis)"/>
</dbReference>
<dbReference type="MIM" id="617795">
    <property type="type" value="gene"/>
</dbReference>
<dbReference type="neXtProt" id="NX_A6NHQ4"/>
<dbReference type="OpenTargets" id="ENSG00000273604"/>
<dbReference type="PharmGKB" id="PA162378581"/>
<dbReference type="VEuPathDB" id="HostDB:ENSG00000273604"/>
<dbReference type="eggNOG" id="ENOG502QSWJ">
    <property type="taxonomic scope" value="Eukaryota"/>
</dbReference>
<dbReference type="GeneTree" id="ENSGT00940000153451"/>
<dbReference type="HOGENOM" id="CLU_062153_0_0_1"/>
<dbReference type="InParanoid" id="A6NHQ4"/>
<dbReference type="OMA" id="PLCTGGW"/>
<dbReference type="OrthoDB" id="10014624at2759"/>
<dbReference type="PAN-GO" id="A6NHQ4">
    <property type="GO annotations" value="1 GO annotation based on evolutionary models"/>
</dbReference>
<dbReference type="PhylomeDB" id="A6NHQ4"/>
<dbReference type="TreeFam" id="TF337589"/>
<dbReference type="PathwayCommons" id="A6NHQ4"/>
<dbReference type="SignaLink" id="A6NHQ4"/>
<dbReference type="BioGRID-ORCS" id="100170841">
    <property type="hits" value="212 hits in 1142 CRISPR screens"/>
</dbReference>
<dbReference type="GenomeRNAi" id="100170841"/>
<dbReference type="Pharos" id="A6NHQ4">
    <property type="development level" value="Tdark"/>
</dbReference>
<dbReference type="PRO" id="PR:A6NHQ4"/>
<dbReference type="Proteomes" id="UP000005640">
    <property type="component" value="Chromosome 17"/>
</dbReference>
<dbReference type="RNAct" id="A6NHQ4">
    <property type="molecule type" value="protein"/>
</dbReference>
<dbReference type="Bgee" id="ENSG00000273604">
    <property type="expression patterns" value="Expressed in superior frontal gyrus and 93 other cell types or tissues"/>
</dbReference>
<dbReference type="GO" id="GO:0005694">
    <property type="term" value="C:chromosome"/>
    <property type="evidence" value="ECO:0007669"/>
    <property type="project" value="UniProtKB-SubCell"/>
</dbReference>
<dbReference type="GO" id="GO:0070449">
    <property type="term" value="C:elongin complex"/>
    <property type="evidence" value="ECO:0007669"/>
    <property type="project" value="Ensembl"/>
</dbReference>
<dbReference type="GO" id="GO:0035098">
    <property type="term" value="C:ESC/E(Z) complex"/>
    <property type="evidence" value="ECO:0007669"/>
    <property type="project" value="Ensembl"/>
</dbReference>
<dbReference type="GO" id="GO:0003682">
    <property type="term" value="F:chromatin binding"/>
    <property type="evidence" value="ECO:0000250"/>
    <property type="project" value="UniProtKB"/>
</dbReference>
<dbReference type="GO" id="GO:0044877">
    <property type="term" value="F:protein-containing complex binding"/>
    <property type="evidence" value="ECO:0000250"/>
    <property type="project" value="UniProtKB"/>
</dbReference>
<dbReference type="GO" id="GO:0048663">
    <property type="term" value="P:neuron fate commitment"/>
    <property type="evidence" value="ECO:0000318"/>
    <property type="project" value="GO_Central"/>
</dbReference>
<dbReference type="GO" id="GO:0006357">
    <property type="term" value="P:regulation of transcription by RNA polymerase II"/>
    <property type="evidence" value="ECO:0000250"/>
    <property type="project" value="UniProtKB"/>
</dbReference>
<dbReference type="GO" id="GO:0048863">
    <property type="term" value="P:stem cell differentiation"/>
    <property type="evidence" value="ECO:0000250"/>
    <property type="project" value="UniProtKB"/>
</dbReference>
<dbReference type="GO" id="GO:0140673">
    <property type="term" value="P:transcription elongation-coupled chromatin remodeling"/>
    <property type="evidence" value="ECO:0007669"/>
    <property type="project" value="Ensembl"/>
</dbReference>
<dbReference type="InterPro" id="IPR052119">
    <property type="entry name" value="ElonginBC-PRC2_ViralRestrict"/>
</dbReference>
<dbReference type="InterPro" id="IPR027971">
    <property type="entry name" value="EPOP"/>
</dbReference>
<dbReference type="PANTHER" id="PTHR23187:SF1">
    <property type="entry name" value="ELONGIN BC AND POLYCOMB REPRESSIVE COMPLEX 2-ASSOCIATED PROTEIN"/>
    <property type="match status" value="1"/>
</dbReference>
<dbReference type="PANTHER" id="PTHR23187">
    <property type="entry name" value="FLJ44216 PROTEIN-RELATED"/>
    <property type="match status" value="1"/>
</dbReference>
<dbReference type="Pfam" id="PF15223">
    <property type="entry name" value="EPOP"/>
    <property type="match status" value="1"/>
</dbReference>
<dbReference type="PRINTS" id="PR01217">
    <property type="entry name" value="PRICHEXTENSN"/>
</dbReference>